<accession>Q3BUY8</accession>
<sequence>MLDPALLRQHPADLAERLRSTRSFDLNIAELELLESERKRIQVRTQELQSQRNSKSKAIGQAKAKGEDVAALMAEVAGFGDELKASEEALDAIRAKLEGIALGLPNLPAEDVPLGKDESENVEQSRWGTPRQFDFAVKDHVELGAPHGWLDGETAAKLSGARFTVLRGPVARLHRALAQFMLDLHVGEHGYEETNVPLLVNADSMRGTGQLPKFEDDLFQTEVGESRRYLIPTSEVPLTNIVRDEIIDAERLPLRMTAHSMCFRAEAGSGGRDTRGMIRQHQFEKVELVTACAPEDSDAEHQRMTRCAEVVLEQLGLPYRKVLLCTGDMGFSAIKTYDLEVWLPSQNTYREISSCSNCGDFQARRMQARWRNPVSGKPELLHTLNGSGTAVGRAMIAVMENYQNADGSIDVPQVLRPYMGGLERIG</sequence>
<protein>
    <recommendedName>
        <fullName evidence="1">Serine--tRNA ligase</fullName>
        <ecNumber evidence="1">6.1.1.11</ecNumber>
    </recommendedName>
    <alternativeName>
        <fullName evidence="1">Seryl-tRNA synthetase</fullName>
        <shortName evidence="1">SerRS</shortName>
    </alternativeName>
    <alternativeName>
        <fullName evidence="1">Seryl-tRNA(Ser/Sec) synthetase</fullName>
    </alternativeName>
</protein>
<proteinExistence type="inferred from homology"/>
<evidence type="ECO:0000255" key="1">
    <source>
        <dbReference type="HAMAP-Rule" id="MF_00176"/>
    </source>
</evidence>
<organism>
    <name type="scientific">Xanthomonas euvesicatoria pv. vesicatoria (strain 85-10)</name>
    <name type="common">Xanthomonas campestris pv. vesicatoria</name>
    <dbReference type="NCBI Taxonomy" id="316273"/>
    <lineage>
        <taxon>Bacteria</taxon>
        <taxon>Pseudomonadati</taxon>
        <taxon>Pseudomonadota</taxon>
        <taxon>Gammaproteobacteria</taxon>
        <taxon>Lysobacterales</taxon>
        <taxon>Lysobacteraceae</taxon>
        <taxon>Xanthomonas</taxon>
    </lineage>
</organism>
<reference key="1">
    <citation type="journal article" date="2005" name="J. Bacteriol.">
        <title>Insights into genome plasticity and pathogenicity of the plant pathogenic Bacterium Xanthomonas campestris pv. vesicatoria revealed by the complete genome sequence.</title>
        <authorList>
            <person name="Thieme F."/>
            <person name="Koebnik R."/>
            <person name="Bekel T."/>
            <person name="Berger C."/>
            <person name="Boch J."/>
            <person name="Buettner D."/>
            <person name="Caldana C."/>
            <person name="Gaigalat L."/>
            <person name="Goesmann A."/>
            <person name="Kay S."/>
            <person name="Kirchner O."/>
            <person name="Lanz C."/>
            <person name="Linke B."/>
            <person name="McHardy A.C."/>
            <person name="Meyer F."/>
            <person name="Mittenhuber G."/>
            <person name="Nies D.H."/>
            <person name="Niesbach-Kloesgen U."/>
            <person name="Patschkowski T."/>
            <person name="Rueckert C."/>
            <person name="Rupp O."/>
            <person name="Schneiker S."/>
            <person name="Schuster S.C."/>
            <person name="Vorhoelter F.J."/>
            <person name="Weber E."/>
            <person name="Puehler A."/>
            <person name="Bonas U."/>
            <person name="Bartels D."/>
            <person name="Kaiser O."/>
        </authorList>
    </citation>
    <scope>NUCLEOTIDE SEQUENCE [LARGE SCALE GENOMIC DNA]</scope>
    <source>
        <strain>85-10</strain>
    </source>
</reference>
<comment type="function">
    <text evidence="1">Catalyzes the attachment of serine to tRNA(Ser). Is also able to aminoacylate tRNA(Sec) with serine, to form the misacylated tRNA L-seryl-tRNA(Sec), which will be further converted into selenocysteinyl-tRNA(Sec).</text>
</comment>
<comment type="catalytic activity">
    <reaction evidence="1">
        <text>tRNA(Ser) + L-serine + ATP = L-seryl-tRNA(Ser) + AMP + diphosphate + H(+)</text>
        <dbReference type="Rhea" id="RHEA:12292"/>
        <dbReference type="Rhea" id="RHEA-COMP:9669"/>
        <dbReference type="Rhea" id="RHEA-COMP:9703"/>
        <dbReference type="ChEBI" id="CHEBI:15378"/>
        <dbReference type="ChEBI" id="CHEBI:30616"/>
        <dbReference type="ChEBI" id="CHEBI:33019"/>
        <dbReference type="ChEBI" id="CHEBI:33384"/>
        <dbReference type="ChEBI" id="CHEBI:78442"/>
        <dbReference type="ChEBI" id="CHEBI:78533"/>
        <dbReference type="ChEBI" id="CHEBI:456215"/>
        <dbReference type="EC" id="6.1.1.11"/>
    </reaction>
</comment>
<comment type="catalytic activity">
    <reaction evidence="1">
        <text>tRNA(Sec) + L-serine + ATP = L-seryl-tRNA(Sec) + AMP + diphosphate + H(+)</text>
        <dbReference type="Rhea" id="RHEA:42580"/>
        <dbReference type="Rhea" id="RHEA-COMP:9742"/>
        <dbReference type="Rhea" id="RHEA-COMP:10128"/>
        <dbReference type="ChEBI" id="CHEBI:15378"/>
        <dbReference type="ChEBI" id="CHEBI:30616"/>
        <dbReference type="ChEBI" id="CHEBI:33019"/>
        <dbReference type="ChEBI" id="CHEBI:33384"/>
        <dbReference type="ChEBI" id="CHEBI:78442"/>
        <dbReference type="ChEBI" id="CHEBI:78533"/>
        <dbReference type="ChEBI" id="CHEBI:456215"/>
        <dbReference type="EC" id="6.1.1.11"/>
    </reaction>
</comment>
<comment type="pathway">
    <text evidence="1">Aminoacyl-tRNA biosynthesis; selenocysteinyl-tRNA(Sec) biosynthesis; L-seryl-tRNA(Sec) from L-serine and tRNA(Sec): step 1/1.</text>
</comment>
<comment type="subunit">
    <text evidence="1">Homodimer. The tRNA molecule binds across the dimer.</text>
</comment>
<comment type="subcellular location">
    <subcellularLocation>
        <location evidence="1">Cytoplasm</location>
    </subcellularLocation>
</comment>
<comment type="domain">
    <text evidence="1">Consists of two distinct domains, a catalytic core and a N-terminal extension that is involved in tRNA binding.</text>
</comment>
<comment type="similarity">
    <text evidence="1">Belongs to the class-II aminoacyl-tRNA synthetase family. Type-1 seryl-tRNA synthetase subfamily.</text>
</comment>
<feature type="chain" id="PRO_1000019866" description="Serine--tRNA ligase">
    <location>
        <begin position="1"/>
        <end position="426"/>
    </location>
</feature>
<feature type="binding site" evidence="1">
    <location>
        <begin position="233"/>
        <end position="235"/>
    </location>
    <ligand>
        <name>L-serine</name>
        <dbReference type="ChEBI" id="CHEBI:33384"/>
    </ligand>
</feature>
<feature type="binding site" evidence="1">
    <location>
        <begin position="264"/>
        <end position="266"/>
    </location>
    <ligand>
        <name>ATP</name>
        <dbReference type="ChEBI" id="CHEBI:30616"/>
    </ligand>
</feature>
<feature type="binding site" evidence="1">
    <location>
        <position position="287"/>
    </location>
    <ligand>
        <name>L-serine</name>
        <dbReference type="ChEBI" id="CHEBI:33384"/>
    </ligand>
</feature>
<feature type="binding site" evidence="1">
    <location>
        <begin position="351"/>
        <end position="354"/>
    </location>
    <ligand>
        <name>ATP</name>
        <dbReference type="ChEBI" id="CHEBI:30616"/>
    </ligand>
</feature>
<feature type="binding site" evidence="1">
    <location>
        <position position="387"/>
    </location>
    <ligand>
        <name>L-serine</name>
        <dbReference type="ChEBI" id="CHEBI:33384"/>
    </ligand>
</feature>
<dbReference type="EC" id="6.1.1.11" evidence="1"/>
<dbReference type="EMBL" id="AM039952">
    <property type="protein sequence ID" value="CAJ23371.1"/>
    <property type="molecule type" value="Genomic_DNA"/>
</dbReference>
<dbReference type="RefSeq" id="WP_008574929.1">
    <property type="nucleotide sequence ID" value="NZ_CP017190.1"/>
</dbReference>
<dbReference type="SMR" id="Q3BUY8"/>
<dbReference type="STRING" id="456327.BJD11_14110"/>
<dbReference type="GeneID" id="97510033"/>
<dbReference type="KEGG" id="xcv:XCV1694"/>
<dbReference type="eggNOG" id="COG0172">
    <property type="taxonomic scope" value="Bacteria"/>
</dbReference>
<dbReference type="HOGENOM" id="CLU_023797_1_1_6"/>
<dbReference type="UniPathway" id="UPA00906">
    <property type="reaction ID" value="UER00895"/>
</dbReference>
<dbReference type="Proteomes" id="UP000007069">
    <property type="component" value="Chromosome"/>
</dbReference>
<dbReference type="GO" id="GO:0005737">
    <property type="term" value="C:cytoplasm"/>
    <property type="evidence" value="ECO:0007669"/>
    <property type="project" value="UniProtKB-SubCell"/>
</dbReference>
<dbReference type="GO" id="GO:0005524">
    <property type="term" value="F:ATP binding"/>
    <property type="evidence" value="ECO:0007669"/>
    <property type="project" value="UniProtKB-UniRule"/>
</dbReference>
<dbReference type="GO" id="GO:0004828">
    <property type="term" value="F:serine-tRNA ligase activity"/>
    <property type="evidence" value="ECO:0007669"/>
    <property type="project" value="UniProtKB-UniRule"/>
</dbReference>
<dbReference type="GO" id="GO:0016260">
    <property type="term" value="P:selenocysteine biosynthetic process"/>
    <property type="evidence" value="ECO:0007669"/>
    <property type="project" value="UniProtKB-UniRule"/>
</dbReference>
<dbReference type="GO" id="GO:0006434">
    <property type="term" value="P:seryl-tRNA aminoacylation"/>
    <property type="evidence" value="ECO:0007669"/>
    <property type="project" value="UniProtKB-UniRule"/>
</dbReference>
<dbReference type="CDD" id="cd00770">
    <property type="entry name" value="SerRS_core"/>
    <property type="match status" value="1"/>
</dbReference>
<dbReference type="Gene3D" id="3.30.930.10">
    <property type="entry name" value="Bira Bifunctional Protein, Domain 2"/>
    <property type="match status" value="1"/>
</dbReference>
<dbReference type="Gene3D" id="1.10.287.40">
    <property type="entry name" value="Serine-tRNA synthetase, tRNA binding domain"/>
    <property type="match status" value="1"/>
</dbReference>
<dbReference type="HAMAP" id="MF_00176">
    <property type="entry name" value="Ser_tRNA_synth_type1"/>
    <property type="match status" value="1"/>
</dbReference>
<dbReference type="InterPro" id="IPR002314">
    <property type="entry name" value="aa-tRNA-synt_IIb"/>
</dbReference>
<dbReference type="InterPro" id="IPR006195">
    <property type="entry name" value="aa-tRNA-synth_II"/>
</dbReference>
<dbReference type="InterPro" id="IPR045864">
    <property type="entry name" value="aa-tRNA-synth_II/BPL/LPL"/>
</dbReference>
<dbReference type="InterPro" id="IPR002317">
    <property type="entry name" value="Ser-tRNA-ligase_type_1"/>
</dbReference>
<dbReference type="InterPro" id="IPR015866">
    <property type="entry name" value="Ser-tRNA-synth_1_N"/>
</dbReference>
<dbReference type="InterPro" id="IPR042103">
    <property type="entry name" value="SerRS_1_N_sf"/>
</dbReference>
<dbReference type="InterPro" id="IPR033729">
    <property type="entry name" value="SerRS_core"/>
</dbReference>
<dbReference type="InterPro" id="IPR010978">
    <property type="entry name" value="tRNA-bd_arm"/>
</dbReference>
<dbReference type="NCBIfam" id="TIGR00414">
    <property type="entry name" value="serS"/>
    <property type="match status" value="1"/>
</dbReference>
<dbReference type="PANTHER" id="PTHR43697:SF1">
    <property type="entry name" value="SERINE--TRNA LIGASE"/>
    <property type="match status" value="1"/>
</dbReference>
<dbReference type="PANTHER" id="PTHR43697">
    <property type="entry name" value="SERYL-TRNA SYNTHETASE"/>
    <property type="match status" value="1"/>
</dbReference>
<dbReference type="Pfam" id="PF02403">
    <property type="entry name" value="Seryl_tRNA_N"/>
    <property type="match status" value="1"/>
</dbReference>
<dbReference type="Pfam" id="PF00587">
    <property type="entry name" value="tRNA-synt_2b"/>
    <property type="match status" value="1"/>
</dbReference>
<dbReference type="PIRSF" id="PIRSF001529">
    <property type="entry name" value="Ser-tRNA-synth_IIa"/>
    <property type="match status" value="1"/>
</dbReference>
<dbReference type="PRINTS" id="PR00981">
    <property type="entry name" value="TRNASYNTHSER"/>
</dbReference>
<dbReference type="SUPFAM" id="SSF55681">
    <property type="entry name" value="Class II aaRS and biotin synthetases"/>
    <property type="match status" value="1"/>
</dbReference>
<dbReference type="SUPFAM" id="SSF46589">
    <property type="entry name" value="tRNA-binding arm"/>
    <property type="match status" value="1"/>
</dbReference>
<dbReference type="PROSITE" id="PS50862">
    <property type="entry name" value="AA_TRNA_LIGASE_II"/>
    <property type="match status" value="1"/>
</dbReference>
<name>SYS_XANE5</name>
<gene>
    <name evidence="1" type="primary">serS</name>
    <name type="ordered locus">XCV1694</name>
</gene>
<keyword id="KW-0030">Aminoacyl-tRNA synthetase</keyword>
<keyword id="KW-0067">ATP-binding</keyword>
<keyword id="KW-0963">Cytoplasm</keyword>
<keyword id="KW-0436">Ligase</keyword>
<keyword id="KW-0547">Nucleotide-binding</keyword>
<keyword id="KW-0648">Protein biosynthesis</keyword>